<keyword id="KW-0028">Amino-acid biosynthesis</keyword>
<keyword id="KW-0963">Cytoplasm</keyword>
<keyword id="KW-0220">Diaminopimelate biosynthesis</keyword>
<keyword id="KW-0456">Lyase</keyword>
<keyword id="KW-0457">Lysine biosynthesis</keyword>
<keyword id="KW-1185">Reference proteome</keyword>
<keyword id="KW-0704">Schiff base</keyword>
<protein>
    <recommendedName>
        <fullName evidence="1">4-hydroxy-tetrahydrodipicolinate synthase</fullName>
        <shortName evidence="1">HTPA synthase</shortName>
        <ecNumber evidence="1">4.3.3.7</ecNumber>
    </recommendedName>
</protein>
<dbReference type="EC" id="4.3.3.7" evidence="1"/>
<dbReference type="EMBL" id="CU928145">
    <property type="protein sequence ID" value="CAU98632.1"/>
    <property type="molecule type" value="Genomic_DNA"/>
</dbReference>
<dbReference type="RefSeq" id="WP_001295469.1">
    <property type="nucleotide sequence ID" value="NZ_CP028304.1"/>
</dbReference>
<dbReference type="SMR" id="B7LCL6"/>
<dbReference type="GeneID" id="93774660"/>
<dbReference type="KEGG" id="eck:EC55989_2761"/>
<dbReference type="HOGENOM" id="CLU_049343_7_1_6"/>
<dbReference type="UniPathway" id="UPA00034">
    <property type="reaction ID" value="UER00017"/>
</dbReference>
<dbReference type="Proteomes" id="UP000000746">
    <property type="component" value="Chromosome"/>
</dbReference>
<dbReference type="GO" id="GO:0005829">
    <property type="term" value="C:cytosol"/>
    <property type="evidence" value="ECO:0007669"/>
    <property type="project" value="TreeGrafter"/>
</dbReference>
<dbReference type="GO" id="GO:0008840">
    <property type="term" value="F:4-hydroxy-tetrahydrodipicolinate synthase activity"/>
    <property type="evidence" value="ECO:0007669"/>
    <property type="project" value="UniProtKB-UniRule"/>
</dbReference>
<dbReference type="GO" id="GO:0019877">
    <property type="term" value="P:diaminopimelate biosynthetic process"/>
    <property type="evidence" value="ECO:0007669"/>
    <property type="project" value="UniProtKB-UniRule"/>
</dbReference>
<dbReference type="GO" id="GO:0009089">
    <property type="term" value="P:lysine biosynthetic process via diaminopimelate"/>
    <property type="evidence" value="ECO:0007669"/>
    <property type="project" value="UniProtKB-UniRule"/>
</dbReference>
<dbReference type="CDD" id="cd00950">
    <property type="entry name" value="DHDPS"/>
    <property type="match status" value="1"/>
</dbReference>
<dbReference type="FunFam" id="3.20.20.70:FF:000046">
    <property type="entry name" value="4-hydroxy-tetrahydrodipicolinate synthase"/>
    <property type="match status" value="1"/>
</dbReference>
<dbReference type="Gene3D" id="3.20.20.70">
    <property type="entry name" value="Aldolase class I"/>
    <property type="match status" value="1"/>
</dbReference>
<dbReference type="HAMAP" id="MF_00418">
    <property type="entry name" value="DapA"/>
    <property type="match status" value="1"/>
</dbReference>
<dbReference type="InterPro" id="IPR013785">
    <property type="entry name" value="Aldolase_TIM"/>
</dbReference>
<dbReference type="InterPro" id="IPR005263">
    <property type="entry name" value="DapA"/>
</dbReference>
<dbReference type="InterPro" id="IPR002220">
    <property type="entry name" value="DapA-like"/>
</dbReference>
<dbReference type="InterPro" id="IPR020625">
    <property type="entry name" value="Schiff_base-form_aldolases_AS"/>
</dbReference>
<dbReference type="InterPro" id="IPR020624">
    <property type="entry name" value="Schiff_base-form_aldolases_CS"/>
</dbReference>
<dbReference type="NCBIfam" id="TIGR00674">
    <property type="entry name" value="dapA"/>
    <property type="match status" value="1"/>
</dbReference>
<dbReference type="PANTHER" id="PTHR12128:SF66">
    <property type="entry name" value="4-HYDROXY-2-OXOGLUTARATE ALDOLASE, MITOCHONDRIAL"/>
    <property type="match status" value="1"/>
</dbReference>
<dbReference type="PANTHER" id="PTHR12128">
    <property type="entry name" value="DIHYDRODIPICOLINATE SYNTHASE"/>
    <property type="match status" value="1"/>
</dbReference>
<dbReference type="Pfam" id="PF00701">
    <property type="entry name" value="DHDPS"/>
    <property type="match status" value="1"/>
</dbReference>
<dbReference type="PIRSF" id="PIRSF001365">
    <property type="entry name" value="DHDPS"/>
    <property type="match status" value="1"/>
</dbReference>
<dbReference type="PRINTS" id="PR00146">
    <property type="entry name" value="DHPICSNTHASE"/>
</dbReference>
<dbReference type="SMART" id="SM01130">
    <property type="entry name" value="DHDPS"/>
    <property type="match status" value="1"/>
</dbReference>
<dbReference type="SUPFAM" id="SSF51569">
    <property type="entry name" value="Aldolase"/>
    <property type="match status" value="1"/>
</dbReference>
<dbReference type="PROSITE" id="PS00665">
    <property type="entry name" value="DHDPS_1"/>
    <property type="match status" value="1"/>
</dbReference>
<dbReference type="PROSITE" id="PS00666">
    <property type="entry name" value="DHDPS_2"/>
    <property type="match status" value="1"/>
</dbReference>
<proteinExistence type="inferred from homology"/>
<name>DAPA_ECO55</name>
<evidence type="ECO:0000255" key="1">
    <source>
        <dbReference type="HAMAP-Rule" id="MF_00418"/>
    </source>
</evidence>
<evidence type="ECO:0000305" key="2"/>
<accession>B7LCL6</accession>
<comment type="function">
    <text evidence="1">Catalyzes the condensation of (S)-aspartate-beta-semialdehyde [(S)-ASA] and pyruvate to 4-hydroxy-tetrahydrodipicolinate (HTPA).</text>
</comment>
<comment type="catalytic activity">
    <reaction evidence="1">
        <text>L-aspartate 4-semialdehyde + pyruvate = (2S,4S)-4-hydroxy-2,3,4,5-tetrahydrodipicolinate + H2O + H(+)</text>
        <dbReference type="Rhea" id="RHEA:34171"/>
        <dbReference type="ChEBI" id="CHEBI:15361"/>
        <dbReference type="ChEBI" id="CHEBI:15377"/>
        <dbReference type="ChEBI" id="CHEBI:15378"/>
        <dbReference type="ChEBI" id="CHEBI:67139"/>
        <dbReference type="ChEBI" id="CHEBI:537519"/>
        <dbReference type="EC" id="4.3.3.7"/>
    </reaction>
</comment>
<comment type="pathway">
    <text evidence="1">Amino-acid biosynthesis; L-lysine biosynthesis via DAP pathway; (S)-tetrahydrodipicolinate from L-aspartate: step 3/4.</text>
</comment>
<comment type="subunit">
    <text evidence="1">Homotetramer; dimer of dimers.</text>
</comment>
<comment type="subcellular location">
    <subcellularLocation>
        <location evidence="1">Cytoplasm</location>
    </subcellularLocation>
</comment>
<comment type="similarity">
    <text evidence="1">Belongs to the DapA family.</text>
</comment>
<comment type="caution">
    <text evidence="2">Was originally thought to be a dihydrodipicolinate synthase (DHDPS), catalyzing the condensation of (S)-aspartate-beta-semialdehyde [(S)-ASA] and pyruvate to dihydrodipicolinate (DHDP). However, it was shown in E.coli that the product of the enzymatic reaction is not dihydrodipicolinate but in fact (4S)-4-hydroxy-2,3,4,5-tetrahydro-(2S)-dipicolinic acid (HTPA), and that the consecutive dehydration reaction leading to DHDP is not spontaneous but catalyzed by DapB.</text>
</comment>
<gene>
    <name evidence="1" type="primary">dapA</name>
    <name type="ordered locus">EC55989_2761</name>
</gene>
<reference key="1">
    <citation type="journal article" date="2009" name="PLoS Genet.">
        <title>Organised genome dynamics in the Escherichia coli species results in highly diverse adaptive paths.</title>
        <authorList>
            <person name="Touchon M."/>
            <person name="Hoede C."/>
            <person name="Tenaillon O."/>
            <person name="Barbe V."/>
            <person name="Baeriswyl S."/>
            <person name="Bidet P."/>
            <person name="Bingen E."/>
            <person name="Bonacorsi S."/>
            <person name="Bouchier C."/>
            <person name="Bouvet O."/>
            <person name="Calteau A."/>
            <person name="Chiapello H."/>
            <person name="Clermont O."/>
            <person name="Cruveiller S."/>
            <person name="Danchin A."/>
            <person name="Diard M."/>
            <person name="Dossat C."/>
            <person name="Karoui M.E."/>
            <person name="Frapy E."/>
            <person name="Garry L."/>
            <person name="Ghigo J.M."/>
            <person name="Gilles A.M."/>
            <person name="Johnson J."/>
            <person name="Le Bouguenec C."/>
            <person name="Lescat M."/>
            <person name="Mangenot S."/>
            <person name="Martinez-Jehanne V."/>
            <person name="Matic I."/>
            <person name="Nassif X."/>
            <person name="Oztas S."/>
            <person name="Petit M.A."/>
            <person name="Pichon C."/>
            <person name="Rouy Z."/>
            <person name="Ruf C.S."/>
            <person name="Schneider D."/>
            <person name="Tourret J."/>
            <person name="Vacherie B."/>
            <person name="Vallenet D."/>
            <person name="Medigue C."/>
            <person name="Rocha E.P.C."/>
            <person name="Denamur E."/>
        </authorList>
    </citation>
    <scope>NUCLEOTIDE SEQUENCE [LARGE SCALE GENOMIC DNA]</scope>
    <source>
        <strain>55989 / EAEC</strain>
    </source>
</reference>
<feature type="chain" id="PRO_1000134866" description="4-hydroxy-tetrahydrodipicolinate synthase">
    <location>
        <begin position="1"/>
        <end position="292"/>
    </location>
</feature>
<feature type="active site" description="Proton donor/acceptor" evidence="1">
    <location>
        <position position="133"/>
    </location>
</feature>
<feature type="active site" description="Schiff-base intermediate with substrate" evidence="1">
    <location>
        <position position="161"/>
    </location>
</feature>
<feature type="binding site" evidence="1">
    <location>
        <position position="45"/>
    </location>
    <ligand>
        <name>pyruvate</name>
        <dbReference type="ChEBI" id="CHEBI:15361"/>
    </ligand>
</feature>
<feature type="binding site" evidence="1">
    <location>
        <position position="203"/>
    </location>
    <ligand>
        <name>pyruvate</name>
        <dbReference type="ChEBI" id="CHEBI:15361"/>
    </ligand>
</feature>
<feature type="site" description="Part of a proton relay during catalysis" evidence="1">
    <location>
        <position position="44"/>
    </location>
</feature>
<feature type="site" description="Part of a proton relay during catalysis" evidence="1">
    <location>
        <position position="107"/>
    </location>
</feature>
<organism>
    <name type="scientific">Escherichia coli (strain 55989 / EAEC)</name>
    <dbReference type="NCBI Taxonomy" id="585055"/>
    <lineage>
        <taxon>Bacteria</taxon>
        <taxon>Pseudomonadati</taxon>
        <taxon>Pseudomonadota</taxon>
        <taxon>Gammaproteobacteria</taxon>
        <taxon>Enterobacterales</taxon>
        <taxon>Enterobacteriaceae</taxon>
        <taxon>Escherichia</taxon>
    </lineage>
</organism>
<sequence length="292" mass="31284">MFTGSIVAIVTPMDEKGNVCRASLKKLIDYHVASGTSAIVSVGTTGESATLNHDEHADVVMMTLELADGRIPVIAGTGANATAEAISLTQRFNDSGIVGCLTVTPYYNRPSQEGLYQHFKAIAEHTDLPQILYNVPSRTGCDLLPETVGRLAKVKNIIGIKEATGNLTRVNQIKELVSDDFVLLSGDDASALDFMQLGGHGVISVTANVAARDMAQMCKLAAEGHFAEARVINQRLMPLHNKLFVEPNPIPVKWACKELGLVATDTLRLPMTPITDSGRETVRAALKHAGLL</sequence>